<accession>P85052</accession>
<accession>D3DLR2</accession>
<reference evidence="4" key="1">
    <citation type="journal article" date="1997" name="Nature">
        <title>The nucleotide sequence of Saccharomyces cerevisiae chromosome V.</title>
        <authorList>
            <person name="Dietrich F.S."/>
            <person name="Mulligan J.T."/>
            <person name="Hennessy K.M."/>
            <person name="Yelton M.A."/>
            <person name="Allen E."/>
            <person name="Araujo R."/>
            <person name="Aviles E."/>
            <person name="Berno A."/>
            <person name="Brennan T."/>
            <person name="Carpenter J."/>
            <person name="Chen E."/>
            <person name="Cherry J.M."/>
            <person name="Chung E."/>
            <person name="Duncan M."/>
            <person name="Guzman E."/>
            <person name="Hartzell G."/>
            <person name="Hunicke-Smith S."/>
            <person name="Hyman R.W."/>
            <person name="Kayser A."/>
            <person name="Komp C."/>
            <person name="Lashkari D."/>
            <person name="Lew H."/>
            <person name="Lin D."/>
            <person name="Mosedale D."/>
            <person name="Nakahara K."/>
            <person name="Namath A."/>
            <person name="Norgren R."/>
            <person name="Oefner P."/>
            <person name="Oh C."/>
            <person name="Petel F.X."/>
            <person name="Roberts D."/>
            <person name="Sehl P."/>
            <person name="Schramm S."/>
            <person name="Shogren T."/>
            <person name="Smith V."/>
            <person name="Taylor P."/>
            <person name="Wei Y."/>
            <person name="Botstein D."/>
            <person name="Davis R.W."/>
        </authorList>
    </citation>
    <scope>NUCLEOTIDE SEQUENCE [LARGE SCALE GENOMIC DNA]</scope>
    <source>
        <strain>ATCC 204508 / S288c</strain>
    </source>
</reference>
<reference key="2">
    <citation type="journal article" date="2014" name="G3 (Bethesda)">
        <title>The reference genome sequence of Saccharomyces cerevisiae: Then and now.</title>
        <authorList>
            <person name="Engel S.R."/>
            <person name="Dietrich F.S."/>
            <person name="Fisk D.G."/>
            <person name="Binkley G."/>
            <person name="Balakrishnan R."/>
            <person name="Costanzo M.C."/>
            <person name="Dwight S.S."/>
            <person name="Hitz B.C."/>
            <person name="Karra K."/>
            <person name="Nash R.S."/>
            <person name="Weng S."/>
            <person name="Wong E.D."/>
            <person name="Lloyd P."/>
            <person name="Skrzypek M.S."/>
            <person name="Miyasato S.R."/>
            <person name="Simison M."/>
            <person name="Cherry J.M."/>
        </authorList>
    </citation>
    <scope>GENOME REANNOTATION</scope>
    <source>
        <strain>ATCC 204508 / S288c</strain>
    </source>
</reference>
<reference evidence="3" key="3">
    <citation type="journal article" date="2001" name="Mol. Biol. Cell">
        <title>A genomic study of the bipolar bud site selection pattern in Saccharomyces cerevisiae.</title>
        <authorList>
            <person name="Ni L."/>
            <person name="Snyder M."/>
        </authorList>
    </citation>
    <scope>FUNCTION</scope>
</reference>
<reference evidence="3" key="4">
    <citation type="journal article" date="2002" name="Proc. Natl. Acad. Sci. U.S.A.">
        <title>A genome-wide screen for methyl methanesulfonate-sensitive mutants reveals genes required for S phase progression in the presence of DNA damage.</title>
        <authorList>
            <person name="Chang M."/>
            <person name="Bellaoui M."/>
            <person name="Boone C."/>
            <person name="Brown G.W."/>
        </authorList>
    </citation>
    <scope>FUNCTION IN MMS RESISTANCE</scope>
</reference>
<proteinExistence type="evidence at protein level"/>
<dbReference type="EMBL" id="U18778">
    <property type="status" value="NOT_ANNOTATED_CDS"/>
    <property type="molecule type" value="Genomic_DNA"/>
</dbReference>
<dbReference type="EMBL" id="BK006939">
    <property type="protein sequence ID" value="DAA07666.1"/>
    <property type="molecule type" value="Genomic_DNA"/>
</dbReference>
<dbReference type="RefSeq" id="NP_076437.1">
    <property type="nucleotide sequence ID" value="NM_001184456.1"/>
</dbReference>
<dbReference type="BioGRID" id="36748">
    <property type="interactions" value="80"/>
</dbReference>
<dbReference type="FunCoup" id="P85052">
    <property type="interactions" value="8"/>
</dbReference>
<dbReference type="STRING" id="4932.YER014C-A"/>
<dbReference type="PaxDb" id="4932-YER014C-A"/>
<dbReference type="EnsemblFungi" id="YER014C-A_mRNA">
    <property type="protein sequence ID" value="YER014C-A"/>
    <property type="gene ID" value="YER014C-A"/>
</dbReference>
<dbReference type="GeneID" id="856735"/>
<dbReference type="KEGG" id="sce:YER014C-A"/>
<dbReference type="AGR" id="SGD:S000007590"/>
<dbReference type="SGD" id="S000007590">
    <property type="gene designation" value="BUD25"/>
</dbReference>
<dbReference type="VEuPathDB" id="FungiDB:YER014C-A"/>
<dbReference type="HOGENOM" id="CLU_1714738_0_0_1"/>
<dbReference type="InParanoid" id="P85052"/>
<dbReference type="BioCyc" id="YEAST:G3O-30391-MONOMER"/>
<dbReference type="BioGRID-ORCS" id="856735">
    <property type="hits" value="2 hits in 10 CRISPR screens"/>
</dbReference>
<dbReference type="PRO" id="PR:P85052"/>
<dbReference type="Proteomes" id="UP000002311">
    <property type="component" value="Chromosome V"/>
</dbReference>
<dbReference type="RNAct" id="P85052">
    <property type="molecule type" value="protein"/>
</dbReference>
<dbReference type="GO" id="GO:0000282">
    <property type="term" value="P:cellular bud site selection"/>
    <property type="evidence" value="ECO:0007001"/>
    <property type="project" value="SGD"/>
</dbReference>
<dbReference type="GO" id="GO:0006974">
    <property type="term" value="P:DNA damage response"/>
    <property type="evidence" value="ECO:0007669"/>
    <property type="project" value="UniProtKB-KW"/>
</dbReference>
<keyword id="KW-0227">DNA damage</keyword>
<keyword id="KW-1185">Reference proteome</keyword>
<gene>
    <name evidence="4" type="primary">BUD25</name>
    <name type="ordered locus">YER014C-A</name>
</gene>
<protein>
    <recommendedName>
        <fullName>Bud site selection protein 25</fullName>
    </recommendedName>
</protein>
<name>BUD25_YEAST</name>
<sequence length="153" mass="18006">MFCTWDSWDTGTSRKSHSPHRNCLAVRFLQLPFSSFLPCVITYMKSWQTSIGDSEFPLTSFQILVTDAEVVVQRIFDCINGYLPGWHYRNTVFIEHTTSYHRSHFCIFVEGVWVCGEFVKKWFEIPFDNRIENYTKQFPWILIGFGNQVSKAL</sequence>
<comment type="function">
    <text evidence="1 2">Involved in bud site selection. Required for resistance to the DNA-damaging agent methyl methanesulfonate (MMS).</text>
</comment>
<feature type="chain" id="PRO_0000270625" description="Bud site selection protein 25">
    <location>
        <begin position="1"/>
        <end position="153"/>
    </location>
</feature>
<evidence type="ECO:0000269" key="1">
    <source>
    </source>
</evidence>
<evidence type="ECO:0000269" key="2">
    <source>
    </source>
</evidence>
<evidence type="ECO:0000305" key="3"/>
<evidence type="ECO:0000312" key="4">
    <source>
        <dbReference type="SGD" id="S000007590"/>
    </source>
</evidence>
<organism>
    <name type="scientific">Saccharomyces cerevisiae (strain ATCC 204508 / S288c)</name>
    <name type="common">Baker's yeast</name>
    <dbReference type="NCBI Taxonomy" id="559292"/>
    <lineage>
        <taxon>Eukaryota</taxon>
        <taxon>Fungi</taxon>
        <taxon>Dikarya</taxon>
        <taxon>Ascomycota</taxon>
        <taxon>Saccharomycotina</taxon>
        <taxon>Saccharomycetes</taxon>
        <taxon>Saccharomycetales</taxon>
        <taxon>Saccharomycetaceae</taxon>
        <taxon>Saccharomyces</taxon>
    </lineage>
</organism>